<name>OBG_ACIB5</name>
<feature type="chain" id="PRO_0000385665" description="GTPase Obg">
    <location>
        <begin position="1"/>
        <end position="406"/>
    </location>
</feature>
<feature type="domain" description="Obg" evidence="2">
    <location>
        <begin position="1"/>
        <end position="159"/>
    </location>
</feature>
<feature type="domain" description="OBG-type G" evidence="1">
    <location>
        <begin position="160"/>
        <end position="333"/>
    </location>
</feature>
<feature type="region of interest" description="Disordered" evidence="3">
    <location>
        <begin position="120"/>
        <end position="143"/>
    </location>
</feature>
<feature type="region of interest" description="Disordered" evidence="3">
    <location>
        <begin position="381"/>
        <end position="406"/>
    </location>
</feature>
<feature type="compositionally biased region" description="Acidic residues" evidence="3">
    <location>
        <begin position="383"/>
        <end position="399"/>
    </location>
</feature>
<feature type="binding site" evidence="1">
    <location>
        <begin position="166"/>
        <end position="173"/>
    </location>
    <ligand>
        <name>GTP</name>
        <dbReference type="ChEBI" id="CHEBI:37565"/>
    </ligand>
</feature>
<feature type="binding site" evidence="1">
    <location>
        <position position="173"/>
    </location>
    <ligand>
        <name>Mg(2+)</name>
        <dbReference type="ChEBI" id="CHEBI:18420"/>
    </ligand>
</feature>
<feature type="binding site" evidence="1">
    <location>
        <begin position="191"/>
        <end position="195"/>
    </location>
    <ligand>
        <name>GTP</name>
        <dbReference type="ChEBI" id="CHEBI:37565"/>
    </ligand>
</feature>
<feature type="binding site" evidence="1">
    <location>
        <position position="193"/>
    </location>
    <ligand>
        <name>Mg(2+)</name>
        <dbReference type="ChEBI" id="CHEBI:18420"/>
    </ligand>
</feature>
<feature type="binding site" evidence="1">
    <location>
        <begin position="213"/>
        <end position="216"/>
    </location>
    <ligand>
        <name>GTP</name>
        <dbReference type="ChEBI" id="CHEBI:37565"/>
    </ligand>
</feature>
<feature type="binding site" evidence="1">
    <location>
        <begin position="283"/>
        <end position="286"/>
    </location>
    <ligand>
        <name>GTP</name>
        <dbReference type="ChEBI" id="CHEBI:37565"/>
    </ligand>
</feature>
<feature type="binding site" evidence="1">
    <location>
        <begin position="314"/>
        <end position="316"/>
    </location>
    <ligand>
        <name>GTP</name>
        <dbReference type="ChEBI" id="CHEBI:37565"/>
    </ligand>
</feature>
<comment type="function">
    <text evidence="1">An essential GTPase which binds GTP, GDP and possibly (p)ppGpp with moderate affinity, with high nucleotide exchange rates and a fairly low GTP hydrolysis rate. Plays a role in control of the cell cycle, stress response, ribosome biogenesis and in those bacteria that undergo differentiation, in morphogenesis control.</text>
</comment>
<comment type="cofactor">
    <cofactor evidence="1">
        <name>Mg(2+)</name>
        <dbReference type="ChEBI" id="CHEBI:18420"/>
    </cofactor>
</comment>
<comment type="subunit">
    <text evidence="1">Monomer.</text>
</comment>
<comment type="subcellular location">
    <subcellularLocation>
        <location evidence="1">Cytoplasm</location>
    </subcellularLocation>
</comment>
<comment type="similarity">
    <text evidence="1">Belongs to the TRAFAC class OBG-HflX-like GTPase superfamily. OBG GTPase family.</text>
</comment>
<evidence type="ECO:0000255" key="1">
    <source>
        <dbReference type="HAMAP-Rule" id="MF_01454"/>
    </source>
</evidence>
<evidence type="ECO:0000255" key="2">
    <source>
        <dbReference type="PROSITE-ProRule" id="PRU01231"/>
    </source>
</evidence>
<evidence type="ECO:0000256" key="3">
    <source>
        <dbReference type="SAM" id="MobiDB-lite"/>
    </source>
</evidence>
<reference key="1">
    <citation type="journal article" date="2008" name="J. Bacteriol.">
        <title>Comparative genome sequence analysis of multidrug-resistant Acinetobacter baumannii.</title>
        <authorList>
            <person name="Adams M.D."/>
            <person name="Goglin K."/>
            <person name="Molyneaux N."/>
            <person name="Hujer K.M."/>
            <person name="Lavender H."/>
            <person name="Jamison J.J."/>
            <person name="MacDonald I.J."/>
            <person name="Martin K.M."/>
            <person name="Russo T."/>
            <person name="Campagnari A.A."/>
            <person name="Hujer A.M."/>
            <person name="Bonomo R.A."/>
            <person name="Gill S.R."/>
        </authorList>
    </citation>
    <scope>NUCLEOTIDE SEQUENCE [LARGE SCALE GENOMIC DNA]</scope>
    <source>
        <strain>AB0057</strain>
    </source>
</reference>
<accession>B7I557</accession>
<proteinExistence type="inferred from homology"/>
<sequence>MRFVDEAVITVEAGDGGNGVASFRREKFVPFGGPDGGDGGRGGSIYIQADDDTSTLVDYRYTRKFRAERGKNGAGANCTGRGGEDVVLKVPVGTTIVDTDSGDIIGDLVEDGQRVMVASGGEGGLGNTHFKSSTNRAPRKCTTGTKGEFREIRLELKVLADVGLLGMPNAGKSTFIRAVSAAKPKVADYPFTTMVPNLGVVDADRHRSFVMADIPGLIEGAAEGAGLGIRFLKHLARTRILLHIIDVQPIDGSDPAHNAKAIMNELAKFSPTLAKLPIVLVLNKLDQIAEESREEWCQHILDELQWTGPVFKTSGLLEEGTKEVVYYLMDQIEQQREREVEDPEYAAEVRAFREQLEAETREQTIAAKEAYRAMRKAQRLESMMDDDDDFDDDEDDGDVESIYVRD</sequence>
<dbReference type="EC" id="3.6.5.-" evidence="1"/>
<dbReference type="EMBL" id="CP001182">
    <property type="protein sequence ID" value="ACJ42284.1"/>
    <property type="molecule type" value="Genomic_DNA"/>
</dbReference>
<dbReference type="SMR" id="B7I557"/>
<dbReference type="KEGG" id="abn:AB57_2941"/>
<dbReference type="HOGENOM" id="CLU_011747_2_0_6"/>
<dbReference type="Proteomes" id="UP000007094">
    <property type="component" value="Chromosome"/>
</dbReference>
<dbReference type="GO" id="GO:0005737">
    <property type="term" value="C:cytoplasm"/>
    <property type="evidence" value="ECO:0007669"/>
    <property type="project" value="UniProtKB-SubCell"/>
</dbReference>
<dbReference type="GO" id="GO:0005525">
    <property type="term" value="F:GTP binding"/>
    <property type="evidence" value="ECO:0007669"/>
    <property type="project" value="UniProtKB-UniRule"/>
</dbReference>
<dbReference type="GO" id="GO:0003924">
    <property type="term" value="F:GTPase activity"/>
    <property type="evidence" value="ECO:0007669"/>
    <property type="project" value="UniProtKB-UniRule"/>
</dbReference>
<dbReference type="GO" id="GO:0000287">
    <property type="term" value="F:magnesium ion binding"/>
    <property type="evidence" value="ECO:0007669"/>
    <property type="project" value="InterPro"/>
</dbReference>
<dbReference type="GO" id="GO:0042254">
    <property type="term" value="P:ribosome biogenesis"/>
    <property type="evidence" value="ECO:0007669"/>
    <property type="project" value="UniProtKB-UniRule"/>
</dbReference>
<dbReference type="CDD" id="cd01898">
    <property type="entry name" value="Obg"/>
    <property type="match status" value="1"/>
</dbReference>
<dbReference type="FunFam" id="2.70.210.12:FF:000001">
    <property type="entry name" value="GTPase Obg"/>
    <property type="match status" value="1"/>
</dbReference>
<dbReference type="Gene3D" id="2.70.210.12">
    <property type="entry name" value="GTP1/OBG domain"/>
    <property type="match status" value="1"/>
</dbReference>
<dbReference type="Gene3D" id="3.40.50.300">
    <property type="entry name" value="P-loop containing nucleotide triphosphate hydrolases"/>
    <property type="match status" value="1"/>
</dbReference>
<dbReference type="HAMAP" id="MF_01454">
    <property type="entry name" value="GTPase_Obg"/>
    <property type="match status" value="1"/>
</dbReference>
<dbReference type="InterPro" id="IPR031167">
    <property type="entry name" value="G_OBG"/>
</dbReference>
<dbReference type="InterPro" id="IPR006073">
    <property type="entry name" value="GTP-bd"/>
</dbReference>
<dbReference type="InterPro" id="IPR014100">
    <property type="entry name" value="GTP-bd_Obg/CgtA"/>
</dbReference>
<dbReference type="InterPro" id="IPR006074">
    <property type="entry name" value="GTP1-OBG_CS"/>
</dbReference>
<dbReference type="InterPro" id="IPR006169">
    <property type="entry name" value="GTP1_OBG_dom"/>
</dbReference>
<dbReference type="InterPro" id="IPR036726">
    <property type="entry name" value="GTP1_OBG_dom_sf"/>
</dbReference>
<dbReference type="InterPro" id="IPR045086">
    <property type="entry name" value="OBG_GTPase"/>
</dbReference>
<dbReference type="InterPro" id="IPR027417">
    <property type="entry name" value="P-loop_NTPase"/>
</dbReference>
<dbReference type="NCBIfam" id="TIGR02729">
    <property type="entry name" value="Obg_CgtA"/>
    <property type="match status" value="1"/>
</dbReference>
<dbReference type="NCBIfam" id="NF008955">
    <property type="entry name" value="PRK12297.1"/>
    <property type="match status" value="1"/>
</dbReference>
<dbReference type="NCBIfam" id="NF008956">
    <property type="entry name" value="PRK12299.1"/>
    <property type="match status" value="1"/>
</dbReference>
<dbReference type="PANTHER" id="PTHR11702">
    <property type="entry name" value="DEVELOPMENTALLY REGULATED GTP-BINDING PROTEIN-RELATED"/>
    <property type="match status" value="1"/>
</dbReference>
<dbReference type="PANTHER" id="PTHR11702:SF31">
    <property type="entry name" value="MITOCHONDRIAL RIBOSOME-ASSOCIATED GTPASE 2"/>
    <property type="match status" value="1"/>
</dbReference>
<dbReference type="Pfam" id="PF01018">
    <property type="entry name" value="GTP1_OBG"/>
    <property type="match status" value="1"/>
</dbReference>
<dbReference type="Pfam" id="PF01926">
    <property type="entry name" value="MMR_HSR1"/>
    <property type="match status" value="1"/>
</dbReference>
<dbReference type="PIRSF" id="PIRSF002401">
    <property type="entry name" value="GTP_bd_Obg/CgtA"/>
    <property type="match status" value="1"/>
</dbReference>
<dbReference type="PRINTS" id="PR00326">
    <property type="entry name" value="GTP1OBG"/>
</dbReference>
<dbReference type="SUPFAM" id="SSF82051">
    <property type="entry name" value="Obg GTP-binding protein N-terminal domain"/>
    <property type="match status" value="1"/>
</dbReference>
<dbReference type="SUPFAM" id="SSF52540">
    <property type="entry name" value="P-loop containing nucleoside triphosphate hydrolases"/>
    <property type="match status" value="1"/>
</dbReference>
<dbReference type="PROSITE" id="PS51710">
    <property type="entry name" value="G_OBG"/>
    <property type="match status" value="1"/>
</dbReference>
<dbReference type="PROSITE" id="PS00905">
    <property type="entry name" value="GTP1_OBG"/>
    <property type="match status" value="1"/>
</dbReference>
<dbReference type="PROSITE" id="PS51883">
    <property type="entry name" value="OBG"/>
    <property type="match status" value="1"/>
</dbReference>
<protein>
    <recommendedName>
        <fullName evidence="1">GTPase Obg</fullName>
        <ecNumber evidence="1">3.6.5.-</ecNumber>
    </recommendedName>
    <alternativeName>
        <fullName evidence="1">GTP-binding protein Obg</fullName>
    </alternativeName>
</protein>
<keyword id="KW-0963">Cytoplasm</keyword>
<keyword id="KW-0342">GTP-binding</keyword>
<keyword id="KW-0378">Hydrolase</keyword>
<keyword id="KW-0460">Magnesium</keyword>
<keyword id="KW-0479">Metal-binding</keyword>
<keyword id="KW-0547">Nucleotide-binding</keyword>
<organism>
    <name type="scientific">Acinetobacter baumannii (strain AB0057)</name>
    <dbReference type="NCBI Taxonomy" id="480119"/>
    <lineage>
        <taxon>Bacteria</taxon>
        <taxon>Pseudomonadati</taxon>
        <taxon>Pseudomonadota</taxon>
        <taxon>Gammaproteobacteria</taxon>
        <taxon>Moraxellales</taxon>
        <taxon>Moraxellaceae</taxon>
        <taxon>Acinetobacter</taxon>
        <taxon>Acinetobacter calcoaceticus/baumannii complex</taxon>
    </lineage>
</organism>
<gene>
    <name evidence="1" type="primary">obg</name>
    <name type="ordered locus">AB57_2941</name>
</gene>